<organism>
    <name type="scientific">Lactococcus lactis subsp. cremoris</name>
    <name type="common">Streptococcus cremoris</name>
    <dbReference type="NCBI Taxonomy" id="1359"/>
    <lineage>
        <taxon>Bacteria</taxon>
        <taxon>Bacillati</taxon>
        <taxon>Bacillota</taxon>
        <taxon>Bacilli</taxon>
        <taxon>Lactobacillales</taxon>
        <taxon>Streptococcaceae</taxon>
        <taxon>Lactococcus</taxon>
    </lineage>
</organism>
<accession>Q76HM7</accession>
<keyword id="KW-0031">Aminopeptidase</keyword>
<keyword id="KW-0963">Cytoplasm</keyword>
<keyword id="KW-0903">Direct protein sequencing</keyword>
<keyword id="KW-0378">Hydrolase</keyword>
<keyword id="KW-0479">Metal-binding</keyword>
<keyword id="KW-0482">Metalloprotease</keyword>
<keyword id="KW-0645">Protease</keyword>
<keyword id="KW-0862">Zinc</keyword>
<name>PEPT2_LACLC</name>
<feature type="chain" id="PRO_0000431586" description="Peptidase T">
    <location>
        <begin position="1"/>
        <end position="413"/>
    </location>
</feature>
<feature type="active site" evidence="1">
    <location>
        <position position="83"/>
    </location>
</feature>
<feature type="active site" description="Proton acceptor" evidence="1">
    <location>
        <position position="178"/>
    </location>
</feature>
<feature type="binding site" evidence="1">
    <location>
        <position position="81"/>
    </location>
    <ligand>
        <name>Zn(2+)</name>
        <dbReference type="ChEBI" id="CHEBI:29105"/>
        <label>1</label>
    </ligand>
</feature>
<feature type="binding site" evidence="1">
    <location>
        <position position="143"/>
    </location>
    <ligand>
        <name>Zn(2+)</name>
        <dbReference type="ChEBI" id="CHEBI:29105"/>
        <label>1</label>
    </ligand>
</feature>
<feature type="binding site" evidence="1">
    <location>
        <position position="143"/>
    </location>
    <ligand>
        <name>Zn(2+)</name>
        <dbReference type="ChEBI" id="CHEBI:29105"/>
        <label>2</label>
    </ligand>
</feature>
<feature type="binding site" evidence="1">
    <location>
        <position position="179"/>
    </location>
    <ligand>
        <name>Zn(2+)</name>
        <dbReference type="ChEBI" id="CHEBI:29105"/>
        <label>2</label>
    </ligand>
</feature>
<feature type="binding site" evidence="1">
    <location>
        <position position="201"/>
    </location>
    <ligand>
        <name>Zn(2+)</name>
        <dbReference type="ChEBI" id="CHEBI:29105"/>
        <label>1</label>
    </ligand>
</feature>
<feature type="binding site" evidence="1">
    <location>
        <position position="383"/>
    </location>
    <ligand>
        <name>Zn(2+)</name>
        <dbReference type="ChEBI" id="CHEBI:29105"/>
        <label>2</label>
    </ligand>
</feature>
<proteinExistence type="evidence at protein level"/>
<gene>
    <name evidence="1 3" type="primary">pepT</name>
</gene>
<reference key="1">
    <citation type="journal article" date="2004" name="Syst. Appl. Microbiol.">
        <title>Phylogenetic analysis of Lactococcus lactis subspecies based on decoding the sequence of the pepT tripeptidase gene, the pepV dipeptidase gene and 16S rRNA.</title>
        <authorList>
            <person name="Mori S."/>
            <person name="Mori K."/>
            <person name="Suzuki I."/>
            <person name="Kasumi T."/>
        </authorList>
    </citation>
    <scope>NUCLEOTIDE SEQUENCE [GENOMIC DNA]</scope>
    <source>
        <strain>NIAI SLN</strain>
        <strain>NIRD 712</strain>
    </source>
</reference>
<reference key="2">
    <citation type="journal article" date="2005" name="Biochim. Biophys. Acta">
        <title>Characterization and kinetic analysis of enzyme-substrate recognition by three recombinant lactococcal tripeptidases.</title>
        <authorList>
            <person name="Mori S."/>
            <person name="Nirasawa S."/>
            <person name="Komba S."/>
            <person name="Kasumi T."/>
        </authorList>
    </citation>
    <scope>PROTEIN SEQUENCE OF N-TERMINUS</scope>
    <scope>FUNCTION</scope>
    <scope>CATALYTIC ACTIVITY</scope>
    <scope>BIOPHYSICOCHEMICAL PROPERTIES</scope>
    <source>
        <strain>NIRD 712</strain>
    </source>
</reference>
<dbReference type="EC" id="3.4.11.4" evidence="1 2"/>
<dbReference type="EMBL" id="AB100766">
    <property type="protein sequence ID" value="BAC66666.1"/>
    <property type="molecule type" value="Genomic_DNA"/>
</dbReference>
<dbReference type="EMBL" id="AB100767">
    <property type="protein sequence ID" value="BAC66667.1"/>
    <property type="molecule type" value="Genomic_DNA"/>
</dbReference>
<dbReference type="RefSeq" id="WP_011676821.1">
    <property type="nucleotide sequence ID" value="NZ_WJUX01000066.1"/>
</dbReference>
<dbReference type="SMR" id="Q76HM7"/>
<dbReference type="GeneID" id="61110139"/>
<dbReference type="OMA" id="GHNFHGK"/>
<dbReference type="SABIO-RK" id="Q76HM7"/>
<dbReference type="GO" id="GO:0005829">
    <property type="term" value="C:cytosol"/>
    <property type="evidence" value="ECO:0007669"/>
    <property type="project" value="TreeGrafter"/>
</dbReference>
<dbReference type="GO" id="GO:0008237">
    <property type="term" value="F:metallopeptidase activity"/>
    <property type="evidence" value="ECO:0007669"/>
    <property type="project" value="UniProtKB-KW"/>
</dbReference>
<dbReference type="GO" id="GO:0045148">
    <property type="term" value="F:tripeptide aminopeptidase activity"/>
    <property type="evidence" value="ECO:0000314"/>
    <property type="project" value="UniProtKB"/>
</dbReference>
<dbReference type="GO" id="GO:0008270">
    <property type="term" value="F:zinc ion binding"/>
    <property type="evidence" value="ECO:0007669"/>
    <property type="project" value="UniProtKB-UniRule"/>
</dbReference>
<dbReference type="GO" id="GO:0043171">
    <property type="term" value="P:peptide catabolic process"/>
    <property type="evidence" value="ECO:0007669"/>
    <property type="project" value="UniProtKB-UniRule"/>
</dbReference>
<dbReference type="GO" id="GO:0006518">
    <property type="term" value="P:peptide metabolic process"/>
    <property type="evidence" value="ECO:0000314"/>
    <property type="project" value="UniProtKB"/>
</dbReference>
<dbReference type="GO" id="GO:0006508">
    <property type="term" value="P:proteolysis"/>
    <property type="evidence" value="ECO:0000314"/>
    <property type="project" value="UniProtKB"/>
</dbReference>
<dbReference type="CDD" id="cd03892">
    <property type="entry name" value="M20_peptT"/>
    <property type="match status" value="1"/>
</dbReference>
<dbReference type="FunFam" id="3.30.70.360:FF:000002">
    <property type="entry name" value="Peptidase T"/>
    <property type="match status" value="1"/>
</dbReference>
<dbReference type="Gene3D" id="3.30.70.360">
    <property type="match status" value="1"/>
</dbReference>
<dbReference type="Gene3D" id="3.40.630.10">
    <property type="entry name" value="Zn peptidases"/>
    <property type="match status" value="1"/>
</dbReference>
<dbReference type="HAMAP" id="MF_00550">
    <property type="entry name" value="Aminopeptidase_M20"/>
    <property type="match status" value="1"/>
</dbReference>
<dbReference type="InterPro" id="IPR001261">
    <property type="entry name" value="ArgE/DapE_CS"/>
</dbReference>
<dbReference type="InterPro" id="IPR036264">
    <property type="entry name" value="Bact_exopeptidase_dim_dom"/>
</dbReference>
<dbReference type="InterPro" id="IPR002933">
    <property type="entry name" value="Peptidase_M20"/>
</dbReference>
<dbReference type="InterPro" id="IPR011650">
    <property type="entry name" value="Peptidase_M20_dimer"/>
</dbReference>
<dbReference type="InterPro" id="IPR010161">
    <property type="entry name" value="Peptidase_M20B"/>
</dbReference>
<dbReference type="NCBIfam" id="TIGR01882">
    <property type="entry name" value="peptidase-T"/>
    <property type="match status" value="1"/>
</dbReference>
<dbReference type="NCBIfam" id="NF003976">
    <property type="entry name" value="PRK05469.1"/>
    <property type="match status" value="1"/>
</dbReference>
<dbReference type="NCBIfam" id="NF009920">
    <property type="entry name" value="PRK13381.1"/>
    <property type="match status" value="1"/>
</dbReference>
<dbReference type="PANTHER" id="PTHR42994">
    <property type="entry name" value="PEPTIDASE T"/>
    <property type="match status" value="1"/>
</dbReference>
<dbReference type="PANTHER" id="PTHR42994:SF1">
    <property type="entry name" value="PEPTIDASE T"/>
    <property type="match status" value="1"/>
</dbReference>
<dbReference type="Pfam" id="PF07687">
    <property type="entry name" value="M20_dimer"/>
    <property type="match status" value="1"/>
</dbReference>
<dbReference type="Pfam" id="PF01546">
    <property type="entry name" value="Peptidase_M20"/>
    <property type="match status" value="1"/>
</dbReference>
<dbReference type="PIRSF" id="PIRSF037215">
    <property type="entry name" value="Peptidase_M20B"/>
    <property type="match status" value="1"/>
</dbReference>
<dbReference type="SUPFAM" id="SSF55031">
    <property type="entry name" value="Bacterial exopeptidase dimerisation domain"/>
    <property type="match status" value="1"/>
</dbReference>
<dbReference type="SUPFAM" id="SSF53187">
    <property type="entry name" value="Zn-dependent exopeptidases"/>
    <property type="match status" value="1"/>
</dbReference>
<dbReference type="PROSITE" id="PS00758">
    <property type="entry name" value="ARGE_DAPE_CPG2_1"/>
    <property type="match status" value="1"/>
</dbReference>
<dbReference type="PROSITE" id="PS00759">
    <property type="entry name" value="ARGE_DAPE_CPG2_2"/>
    <property type="match status" value="1"/>
</dbReference>
<protein>
    <recommendedName>
        <fullName evidence="1">Peptidase T</fullName>
        <ecNumber evidence="1 2">3.4.11.4</ecNumber>
    </recommendedName>
    <alternativeName>
        <fullName evidence="1">Aminotripeptidase</fullName>
        <shortName evidence="1 3">Tripeptidase</shortName>
    </alternativeName>
    <alternativeName>
        <fullName evidence="3">L6PepTR</fullName>
    </alternativeName>
    <alternativeName>
        <fullName evidence="1">Tripeptide aminopeptidase</fullName>
    </alternativeName>
</protein>
<evidence type="ECO:0000255" key="1">
    <source>
        <dbReference type="HAMAP-Rule" id="MF_00550"/>
    </source>
</evidence>
<evidence type="ECO:0000269" key="2">
    <source>
    </source>
</evidence>
<evidence type="ECO:0000303" key="3">
    <source>
    </source>
</evidence>
<comment type="function">
    <text evidence="1 2">Cleaves the N-terminal amino acid of tripeptides.</text>
</comment>
<comment type="catalytic activity">
    <reaction evidence="1 2">
        <text>Release of the N-terminal residue from a tripeptide.</text>
        <dbReference type="EC" id="3.4.11.4"/>
    </reaction>
</comment>
<comment type="cofactor">
    <cofactor evidence="1">
        <name>Zn(2+)</name>
        <dbReference type="ChEBI" id="CHEBI:29105"/>
    </cofactor>
    <text evidence="1">Binds 2 Zn(2+) ions per subunit.</text>
</comment>
<comment type="biophysicochemical properties">
    <kinetics>
        <text evidence="2">kcat is 355 sec(-1) with GGF tripeptide as substrate. kcat is 437 sec(-1) with GGA tripeptide as substrate. kcat is 850 sec(-1) with GAA tripeptide as substrate. kcat is 1050 sec(-1) with GAY tripeptide as substrate. kcat is 240 sec(-1) with AAA tripeptide as substrate. kcat is 1230 sec(-1) with AAG tripeptide as substrate.</text>
    </kinetics>
    <phDependence>
        <text evidence="2">Optimum pH is around 8.</text>
    </phDependence>
    <temperatureDependence>
        <text evidence="2">Optimum temperature is around 40 degrees Celsius.</text>
    </temperatureDependence>
</comment>
<comment type="subcellular location">
    <subcellularLocation>
        <location evidence="1">Cytoplasm</location>
    </subcellularLocation>
</comment>
<comment type="similarity">
    <text evidence="1">Belongs to the peptidase M20B family.</text>
</comment>
<sequence>MKYEKLLPRFLEYVKVNTRSDENSTTTPSTQALVEFAHKMGEDMKALGLKDVHYLESNGYVIGTIPANTDKKVRKIGLLAHLDTADFNAEGVNPQILENYDGESVIQLGDTEFTLDPKDFPNLKNYKGQTLVHTDGTTLLGSDDKSGVAEIMTLADYLLNINPDFEHGEIRVGFGPDEEIGVGADKFDVADFDVDFAYTVDGGPLGELQYETFSAAGAVIEFQGKNVHPGTAKNMMVNALQLAIDYHNALPEFDRPEKTEGREGFFHLLKLDGTPEEARAQYIIRDHEEGKFNERKALMQEIADKMNAELGQNRVKPVIKDQYYNMAQIIEKDMSIIDIAKKAMENLDIAPIIEPIRGGTDGSKISFMGLPTPNLFAGGENMHGRFEFVSVQTMEKAVDTLLEIIRLNNEVAK</sequence>